<feature type="initiator methionine" description="Removed" evidence="1 3 8">
    <location>
        <position position="1"/>
    </location>
</feature>
<feature type="chain" id="PRO_0000134370" description="Small ribosomal subunit protein uS2A">
    <location>
        <begin position="2"/>
        <end position="252"/>
    </location>
</feature>
<feature type="region of interest" description="Disordered" evidence="2">
    <location>
        <begin position="209"/>
        <end position="252"/>
    </location>
</feature>
<feature type="compositionally biased region" description="Acidic residues" evidence="2">
    <location>
        <begin position="218"/>
        <end position="252"/>
    </location>
</feature>
<feature type="modified residue" description="N-acetylserine" evidence="1 3 8">
    <location>
        <position position="2"/>
    </location>
</feature>
<feature type="helix" evidence="18">
    <location>
        <begin position="5"/>
        <end position="7"/>
    </location>
</feature>
<feature type="helix" evidence="18">
    <location>
        <begin position="11"/>
        <end position="19"/>
    </location>
</feature>
<feature type="turn" evidence="18">
    <location>
        <begin position="20"/>
        <end position="23"/>
    </location>
</feature>
<feature type="strand" evidence="17">
    <location>
        <begin position="24"/>
        <end position="28"/>
    </location>
</feature>
<feature type="helix" evidence="16">
    <location>
        <begin position="31"/>
        <end position="36"/>
    </location>
</feature>
<feature type="strand" evidence="18">
    <location>
        <begin position="37"/>
        <end position="40"/>
    </location>
</feature>
<feature type="helix" evidence="16">
    <location>
        <begin position="42"/>
        <end position="44"/>
    </location>
</feature>
<feature type="strand" evidence="18">
    <location>
        <begin position="46"/>
        <end position="48"/>
    </location>
</feature>
<feature type="helix" evidence="18">
    <location>
        <begin position="50"/>
        <end position="64"/>
    </location>
</feature>
<feature type="strand" evidence="18">
    <location>
        <begin position="67"/>
        <end position="69"/>
    </location>
</feature>
<feature type="helix" evidence="18">
    <location>
        <begin position="70"/>
        <end position="72"/>
    </location>
</feature>
<feature type="strand" evidence="18">
    <location>
        <begin position="73"/>
        <end position="77"/>
    </location>
</feature>
<feature type="helix" evidence="18">
    <location>
        <begin position="80"/>
        <end position="82"/>
    </location>
</feature>
<feature type="helix" evidence="18">
    <location>
        <begin position="83"/>
        <end position="92"/>
    </location>
</feature>
<feature type="strand" evidence="18">
    <location>
        <begin position="96"/>
        <end position="100"/>
    </location>
</feature>
<feature type="strand" evidence="18">
    <location>
        <begin position="106"/>
        <end position="108"/>
    </location>
</feature>
<feature type="strand" evidence="18">
    <location>
        <begin position="110"/>
        <end position="112"/>
    </location>
</feature>
<feature type="strand" evidence="18">
    <location>
        <begin position="119"/>
        <end position="124"/>
    </location>
</feature>
<feature type="turn" evidence="18">
    <location>
        <begin position="126"/>
        <end position="129"/>
    </location>
</feature>
<feature type="helix" evidence="18">
    <location>
        <begin position="130"/>
        <end position="136"/>
    </location>
</feature>
<feature type="turn" evidence="18">
    <location>
        <begin position="137"/>
        <end position="140"/>
    </location>
</feature>
<feature type="strand" evidence="18">
    <location>
        <begin position="143"/>
        <end position="147"/>
    </location>
</feature>
<feature type="strand" evidence="19">
    <location>
        <begin position="149"/>
        <end position="151"/>
    </location>
</feature>
<feature type="strand" evidence="18">
    <location>
        <begin position="157"/>
        <end position="161"/>
    </location>
</feature>
<feature type="strand" evidence="16">
    <location>
        <begin position="164"/>
        <end position="166"/>
    </location>
</feature>
<feature type="helix" evidence="18">
    <location>
        <begin position="167"/>
        <end position="184"/>
    </location>
</feature>
<feature type="turn" evidence="18">
    <location>
        <begin position="185"/>
        <end position="187"/>
    </location>
</feature>
<feature type="strand" evidence="17">
    <location>
        <begin position="191"/>
        <end position="193"/>
    </location>
</feature>
<feature type="helix" evidence="18">
    <location>
        <begin position="199"/>
        <end position="202"/>
    </location>
</feature>
<name>RSSA1_YEAST</name>
<keyword id="KW-0002">3D-structure</keyword>
<keyword id="KW-0007">Acetylation</keyword>
<keyword id="KW-0963">Cytoplasm</keyword>
<keyword id="KW-0903">Direct protein sequencing</keyword>
<keyword id="KW-1185">Reference proteome</keyword>
<keyword id="KW-0687">Ribonucleoprotein</keyword>
<keyword id="KW-0689">Ribosomal protein</keyword>
<keyword id="KW-0690">Ribosome biogenesis</keyword>
<keyword id="KW-0698">rRNA processing</keyword>
<protein>
    <recommendedName>
        <fullName evidence="10">Small ribosomal subunit protein uS2A</fullName>
    </recommendedName>
    <alternativeName>
        <fullName evidence="1 11">40S ribosomal protein S0-A</fullName>
    </alternativeName>
    <alternativeName>
        <fullName>Nucleic acid-binding protein NAB1A</fullName>
    </alternativeName>
</protein>
<sequence>MSLPATFDLTPEDAQLLLAANTHLGARNVQVHQEPYVFNARPDGVHVINVGKTWEKLVLAARIIAAIPNPEDVVAISSRTFGQRAVLKFAAHTGATPIAGRFTPGSFTNYITRSFKEPRLVIVTDPRSDAQAIKEASYVNIPVIALTDLDSPSEFVDVAIPCNNRGKHSIGLIWYLLAREVLRLRGALVDRTQPWSIMPDLYFYRDPEEVEQQVAEEATTEEAGEEEAKEEVTEEQAEATEWAEENADNVEW</sequence>
<dbReference type="EMBL" id="M88277">
    <property type="protein sequence ID" value="AAB05643.1"/>
    <property type="molecule type" value="Genomic_DNA"/>
</dbReference>
<dbReference type="EMBL" id="Z72999">
    <property type="protein sequence ID" value="CAA97241.1"/>
    <property type="molecule type" value="Genomic_DNA"/>
</dbReference>
<dbReference type="EMBL" id="BK006941">
    <property type="protein sequence ID" value="DAA08308.1"/>
    <property type="molecule type" value="Genomic_DNA"/>
</dbReference>
<dbReference type="PIR" id="S42143">
    <property type="entry name" value="S42143"/>
</dbReference>
<dbReference type="RefSeq" id="NP_011730.1">
    <property type="nucleotide sequence ID" value="NM_001181343.1"/>
</dbReference>
<dbReference type="PDB" id="3J6X">
    <property type="method" value="EM"/>
    <property type="resolution" value="6.10 A"/>
    <property type="chains" value="S0=1-252"/>
</dbReference>
<dbReference type="PDB" id="3J6Y">
    <property type="method" value="EM"/>
    <property type="resolution" value="6.10 A"/>
    <property type="chains" value="S0=1-252"/>
</dbReference>
<dbReference type="PDB" id="3J77">
    <property type="method" value="EM"/>
    <property type="resolution" value="6.20 A"/>
    <property type="chains" value="S0=1-252"/>
</dbReference>
<dbReference type="PDB" id="3J78">
    <property type="method" value="EM"/>
    <property type="resolution" value="6.30 A"/>
    <property type="chains" value="S0=1-252"/>
</dbReference>
<dbReference type="PDB" id="4U3M">
    <property type="method" value="X-ray"/>
    <property type="resolution" value="3.00 A"/>
    <property type="chains" value="S0/s0=2-252"/>
</dbReference>
<dbReference type="PDB" id="4U3N">
    <property type="method" value="X-ray"/>
    <property type="resolution" value="3.20 A"/>
    <property type="chains" value="S0/s0=2-252"/>
</dbReference>
<dbReference type="PDB" id="4U3U">
    <property type="method" value="X-ray"/>
    <property type="resolution" value="2.90 A"/>
    <property type="chains" value="S0/s0=2-252"/>
</dbReference>
<dbReference type="PDB" id="4U4N">
    <property type="method" value="X-ray"/>
    <property type="resolution" value="3.10 A"/>
    <property type="chains" value="S0/s0=2-252"/>
</dbReference>
<dbReference type="PDB" id="4U4O">
    <property type="method" value="X-ray"/>
    <property type="resolution" value="3.60 A"/>
    <property type="chains" value="S0/s0=2-252"/>
</dbReference>
<dbReference type="PDB" id="4U4Q">
    <property type="method" value="X-ray"/>
    <property type="resolution" value="3.00 A"/>
    <property type="chains" value="S0/s0=2-252"/>
</dbReference>
<dbReference type="PDB" id="4U4R">
    <property type="method" value="X-ray"/>
    <property type="resolution" value="2.80 A"/>
    <property type="chains" value="S0/s0=2-252"/>
</dbReference>
<dbReference type="PDB" id="4U4U">
    <property type="method" value="X-ray"/>
    <property type="resolution" value="3.00 A"/>
    <property type="chains" value="S0/s0=2-252"/>
</dbReference>
<dbReference type="PDB" id="4U4Y">
    <property type="method" value="X-ray"/>
    <property type="resolution" value="3.20 A"/>
    <property type="chains" value="S0/s0=2-252"/>
</dbReference>
<dbReference type="PDB" id="4U4Z">
    <property type="method" value="X-ray"/>
    <property type="resolution" value="3.10 A"/>
    <property type="chains" value="S0/s0=2-252"/>
</dbReference>
<dbReference type="PDB" id="4U50">
    <property type="method" value="X-ray"/>
    <property type="resolution" value="3.20 A"/>
    <property type="chains" value="S0/s0=2-252"/>
</dbReference>
<dbReference type="PDB" id="4U51">
    <property type="method" value="X-ray"/>
    <property type="resolution" value="3.20 A"/>
    <property type="chains" value="S0/s0=2-252"/>
</dbReference>
<dbReference type="PDB" id="4U52">
    <property type="method" value="X-ray"/>
    <property type="resolution" value="3.00 A"/>
    <property type="chains" value="S0/s0=2-252"/>
</dbReference>
<dbReference type="PDB" id="4U53">
    <property type="method" value="X-ray"/>
    <property type="resolution" value="3.30 A"/>
    <property type="chains" value="S0/s0=2-252"/>
</dbReference>
<dbReference type="PDB" id="4U55">
    <property type="method" value="X-ray"/>
    <property type="resolution" value="3.20 A"/>
    <property type="chains" value="S0/s0=2-252"/>
</dbReference>
<dbReference type="PDB" id="4U56">
    <property type="method" value="X-ray"/>
    <property type="resolution" value="3.45 A"/>
    <property type="chains" value="S0/s0=2-252"/>
</dbReference>
<dbReference type="PDB" id="4U6F">
    <property type="method" value="X-ray"/>
    <property type="resolution" value="3.10 A"/>
    <property type="chains" value="S0/s0=2-252"/>
</dbReference>
<dbReference type="PDB" id="4V4B">
    <property type="method" value="EM"/>
    <property type="resolution" value="11.70 A"/>
    <property type="chains" value="AB=14-198"/>
</dbReference>
<dbReference type="PDB" id="4V6I">
    <property type="method" value="EM"/>
    <property type="resolution" value="8.80 A"/>
    <property type="chains" value="AA=1-252"/>
</dbReference>
<dbReference type="PDB" id="4V7R">
    <property type="method" value="X-ray"/>
    <property type="resolution" value="4.00 A"/>
    <property type="chains" value="AA/CA=1-252"/>
</dbReference>
<dbReference type="PDB" id="4V88">
    <property type="method" value="X-ray"/>
    <property type="resolution" value="3.00 A"/>
    <property type="chains" value="AA/CA=1-252"/>
</dbReference>
<dbReference type="PDB" id="4V8Y">
    <property type="method" value="EM"/>
    <property type="resolution" value="4.30 A"/>
    <property type="chains" value="AA=1-252"/>
</dbReference>
<dbReference type="PDB" id="4V8Z">
    <property type="method" value="EM"/>
    <property type="resolution" value="6.60 A"/>
    <property type="chains" value="AA=1-252"/>
</dbReference>
<dbReference type="PDB" id="4V92">
    <property type="method" value="EM"/>
    <property type="resolution" value="3.70 A"/>
    <property type="chains" value="A=2-207"/>
</dbReference>
<dbReference type="PDB" id="5DAT">
    <property type="method" value="X-ray"/>
    <property type="resolution" value="3.15 A"/>
    <property type="chains" value="S0/s0=2-252"/>
</dbReference>
<dbReference type="PDB" id="5DC3">
    <property type="method" value="X-ray"/>
    <property type="resolution" value="3.25 A"/>
    <property type="chains" value="S0/s0=2-252"/>
</dbReference>
<dbReference type="PDB" id="5DGE">
    <property type="method" value="X-ray"/>
    <property type="resolution" value="3.45 A"/>
    <property type="chains" value="S0/s0=2-252"/>
</dbReference>
<dbReference type="PDB" id="5DGF">
    <property type="method" value="X-ray"/>
    <property type="resolution" value="3.30 A"/>
    <property type="chains" value="S0/s0=2-252"/>
</dbReference>
<dbReference type="PDB" id="5DGV">
    <property type="method" value="X-ray"/>
    <property type="resolution" value="3.10 A"/>
    <property type="chains" value="S0/s0=2-252"/>
</dbReference>
<dbReference type="PDB" id="5FCI">
    <property type="method" value="X-ray"/>
    <property type="resolution" value="3.40 A"/>
    <property type="chains" value="S0/s0=2-252"/>
</dbReference>
<dbReference type="PDB" id="5FCJ">
    <property type="method" value="X-ray"/>
    <property type="resolution" value="3.10 A"/>
    <property type="chains" value="S0/s0=2-252"/>
</dbReference>
<dbReference type="PDB" id="5I4L">
    <property type="method" value="X-ray"/>
    <property type="resolution" value="3.10 A"/>
    <property type="chains" value="S0/s0=2-207"/>
</dbReference>
<dbReference type="PDB" id="5JUO">
    <property type="method" value="EM"/>
    <property type="resolution" value="4.00 A"/>
    <property type="chains" value="XA=1-252"/>
</dbReference>
<dbReference type="PDB" id="5JUP">
    <property type="method" value="EM"/>
    <property type="resolution" value="3.50 A"/>
    <property type="chains" value="XA=1-252"/>
</dbReference>
<dbReference type="PDB" id="5JUS">
    <property type="method" value="EM"/>
    <property type="resolution" value="4.20 A"/>
    <property type="chains" value="XA=1-252"/>
</dbReference>
<dbReference type="PDB" id="5JUT">
    <property type="method" value="EM"/>
    <property type="resolution" value="4.00 A"/>
    <property type="chains" value="XA=1-252"/>
</dbReference>
<dbReference type="PDB" id="5JUU">
    <property type="method" value="EM"/>
    <property type="resolution" value="4.00 A"/>
    <property type="chains" value="XA=1-252"/>
</dbReference>
<dbReference type="PDB" id="5LL6">
    <property type="method" value="EM"/>
    <property type="resolution" value="3.90 A"/>
    <property type="chains" value="P=1-252"/>
</dbReference>
<dbReference type="PDB" id="5LYB">
    <property type="method" value="X-ray"/>
    <property type="resolution" value="3.25 A"/>
    <property type="chains" value="S0/s0=2-207"/>
</dbReference>
<dbReference type="PDB" id="5M1J">
    <property type="method" value="EM"/>
    <property type="resolution" value="3.30 A"/>
    <property type="chains" value="A2=2-208"/>
</dbReference>
<dbReference type="PDB" id="5MC6">
    <property type="method" value="EM"/>
    <property type="resolution" value="3.80 A"/>
    <property type="chains" value="P=1-252"/>
</dbReference>
<dbReference type="PDB" id="5MEI">
    <property type="method" value="X-ray"/>
    <property type="resolution" value="3.50 A"/>
    <property type="chains" value="B/s0=2-207"/>
</dbReference>
<dbReference type="PDB" id="5NDG">
    <property type="method" value="X-ray"/>
    <property type="resolution" value="3.70 A"/>
    <property type="chains" value="S0/s0=2-207"/>
</dbReference>
<dbReference type="PDB" id="5NDV">
    <property type="method" value="X-ray"/>
    <property type="resolution" value="3.30 A"/>
    <property type="chains" value="S0/s0=2-207"/>
</dbReference>
<dbReference type="PDB" id="5NDW">
    <property type="method" value="X-ray"/>
    <property type="resolution" value="3.70 A"/>
    <property type="chains" value="S0/s0=2-207"/>
</dbReference>
<dbReference type="PDB" id="5OBM">
    <property type="method" value="X-ray"/>
    <property type="resolution" value="3.40 A"/>
    <property type="chains" value="S0/s0=2-207"/>
</dbReference>
<dbReference type="PDB" id="5ON6">
    <property type="method" value="X-ray"/>
    <property type="resolution" value="3.10 A"/>
    <property type="chains" value="B/s0=2-207"/>
</dbReference>
<dbReference type="PDB" id="5TBW">
    <property type="method" value="X-ray"/>
    <property type="resolution" value="3.00 A"/>
    <property type="chains" value="B/s0=2-207"/>
</dbReference>
<dbReference type="PDB" id="5TGA">
    <property type="method" value="X-ray"/>
    <property type="resolution" value="3.30 A"/>
    <property type="chains" value="S0/s0=2-207"/>
</dbReference>
<dbReference type="PDB" id="5TGM">
    <property type="method" value="X-ray"/>
    <property type="resolution" value="3.50 A"/>
    <property type="chains" value="S0/s0=2-207"/>
</dbReference>
<dbReference type="PDB" id="6EML">
    <property type="method" value="EM"/>
    <property type="resolution" value="3.60 A"/>
    <property type="chains" value="P=1-252"/>
</dbReference>
<dbReference type="PDB" id="6FAI">
    <property type="method" value="EM"/>
    <property type="resolution" value="3.40 A"/>
    <property type="chains" value="A=1-252"/>
</dbReference>
<dbReference type="PDB" id="6GQ1">
    <property type="method" value="EM"/>
    <property type="resolution" value="4.40 A"/>
    <property type="chains" value="q=2-207"/>
</dbReference>
<dbReference type="PDB" id="6GQB">
    <property type="method" value="EM"/>
    <property type="resolution" value="3.90 A"/>
    <property type="chains" value="q=2-207"/>
</dbReference>
<dbReference type="PDB" id="6GQV">
    <property type="method" value="EM"/>
    <property type="resolution" value="4.00 A"/>
    <property type="chains" value="q=2-207"/>
</dbReference>
<dbReference type="PDB" id="6HHQ">
    <property type="method" value="X-ray"/>
    <property type="resolution" value="3.10 A"/>
    <property type="chains" value="B/s0=1-252"/>
</dbReference>
<dbReference type="PDB" id="6I7O">
    <property type="method" value="EM"/>
    <property type="resolution" value="5.30 A"/>
    <property type="chains" value="P/Pb=2-207"/>
</dbReference>
<dbReference type="PDB" id="6Q8Y">
    <property type="method" value="EM"/>
    <property type="resolution" value="3.10 A"/>
    <property type="chains" value="P=2-220"/>
</dbReference>
<dbReference type="PDB" id="6RBD">
    <property type="method" value="EM"/>
    <property type="resolution" value="3.47 A"/>
    <property type="chains" value="A=1-252"/>
</dbReference>
<dbReference type="PDB" id="6RBE">
    <property type="method" value="EM"/>
    <property type="resolution" value="3.80 A"/>
    <property type="chains" value="A=1-252"/>
</dbReference>
<dbReference type="PDB" id="6S47">
    <property type="method" value="EM"/>
    <property type="resolution" value="3.28 A"/>
    <property type="chains" value="BB=2-252"/>
</dbReference>
<dbReference type="PDB" id="6SNT">
    <property type="method" value="EM"/>
    <property type="resolution" value="2.80 A"/>
    <property type="chains" value="A=1-252"/>
</dbReference>
<dbReference type="PDB" id="6SV4">
    <property type="method" value="EM"/>
    <property type="resolution" value="3.30 A"/>
    <property type="chains" value="P/Pb/Pc=1-252"/>
</dbReference>
<dbReference type="PDB" id="6T4Q">
    <property type="method" value="EM"/>
    <property type="resolution" value="2.60 A"/>
    <property type="chains" value="SA=2-207"/>
</dbReference>
<dbReference type="PDB" id="6T7I">
    <property type="method" value="EM"/>
    <property type="resolution" value="3.20 A"/>
    <property type="chains" value="SA=1-252"/>
</dbReference>
<dbReference type="PDB" id="6T7T">
    <property type="method" value="EM"/>
    <property type="resolution" value="3.10 A"/>
    <property type="chains" value="SA=2-207"/>
</dbReference>
<dbReference type="PDB" id="6T83">
    <property type="method" value="EM"/>
    <property type="resolution" value="4.00 A"/>
    <property type="chains" value="Ab/b=1-252"/>
</dbReference>
<dbReference type="PDB" id="6TB3">
    <property type="method" value="EM"/>
    <property type="resolution" value="2.80 A"/>
    <property type="chains" value="P=2-207"/>
</dbReference>
<dbReference type="PDB" id="6TNU">
    <property type="method" value="EM"/>
    <property type="resolution" value="3.10 A"/>
    <property type="chains" value="P=2-207"/>
</dbReference>
<dbReference type="PDB" id="6WDR">
    <property type="method" value="EM"/>
    <property type="resolution" value="3.70 A"/>
    <property type="chains" value="A=2-207"/>
</dbReference>
<dbReference type="PDB" id="6XIQ">
    <property type="method" value="EM"/>
    <property type="resolution" value="4.20 A"/>
    <property type="chains" value="q=1-252"/>
</dbReference>
<dbReference type="PDB" id="6XIR">
    <property type="method" value="EM"/>
    <property type="resolution" value="3.20 A"/>
    <property type="chains" value="q=1-252"/>
</dbReference>
<dbReference type="PDB" id="6Y7C">
    <property type="method" value="EM"/>
    <property type="resolution" value="3.80 A"/>
    <property type="chains" value="A=1-252"/>
</dbReference>
<dbReference type="PDB" id="6Z6J">
    <property type="method" value="EM"/>
    <property type="resolution" value="3.40 A"/>
    <property type="chains" value="SA=1-252"/>
</dbReference>
<dbReference type="PDB" id="6Z6K">
    <property type="method" value="EM"/>
    <property type="resolution" value="3.40 A"/>
    <property type="chains" value="SA=1-252"/>
</dbReference>
<dbReference type="PDB" id="6ZCE">
    <property type="method" value="EM"/>
    <property type="resolution" value="5.30 A"/>
    <property type="chains" value="B=1-252"/>
</dbReference>
<dbReference type="PDB" id="6ZU9">
    <property type="method" value="EM"/>
    <property type="resolution" value="6.20 A"/>
    <property type="chains" value="P=1-252"/>
</dbReference>
<dbReference type="PDB" id="6ZVI">
    <property type="method" value="EM"/>
    <property type="resolution" value="3.00 A"/>
    <property type="chains" value="i=2-207"/>
</dbReference>
<dbReference type="PDB" id="7A1G">
    <property type="method" value="EM"/>
    <property type="resolution" value="3.00 A"/>
    <property type="chains" value="P=2-207"/>
</dbReference>
<dbReference type="PDB" id="7B7D">
    <property type="method" value="EM"/>
    <property type="resolution" value="3.30 A"/>
    <property type="chains" value="P=2-207"/>
</dbReference>
<dbReference type="PDB" id="7MPI">
    <property type="method" value="EM"/>
    <property type="resolution" value="3.05 A"/>
    <property type="chains" value="BA=2-207"/>
</dbReference>
<dbReference type="PDB" id="7MPJ">
    <property type="method" value="EM"/>
    <property type="resolution" value="2.70 A"/>
    <property type="chains" value="BA=2-207"/>
</dbReference>
<dbReference type="PDB" id="7N8B">
    <property type="method" value="EM"/>
    <property type="resolution" value="3.05 A"/>
    <property type="chains" value="BA=2-207"/>
</dbReference>
<dbReference type="PDB" id="7NRC">
    <property type="method" value="EM"/>
    <property type="resolution" value="3.90 A"/>
    <property type="chains" value="SP=2-207"/>
</dbReference>
<dbReference type="PDB" id="7NRD">
    <property type="method" value="EM"/>
    <property type="resolution" value="4.36 A"/>
    <property type="chains" value="SP=2-207"/>
</dbReference>
<dbReference type="PDB" id="7ZPQ">
    <property type="method" value="EM"/>
    <property type="resolution" value="3.47 A"/>
    <property type="chains" value="AA=2-207"/>
</dbReference>
<dbReference type="PDB" id="7ZRS">
    <property type="method" value="EM"/>
    <property type="resolution" value="4.80 A"/>
    <property type="chains" value="AA=2-207"/>
</dbReference>
<dbReference type="PDB" id="7ZUW">
    <property type="method" value="EM"/>
    <property type="resolution" value="4.30 A"/>
    <property type="chains" value="AA=2-207"/>
</dbReference>
<dbReference type="PDB" id="7ZUX">
    <property type="method" value="EM"/>
    <property type="resolution" value="2.50 A"/>
    <property type="chains" value="DA=2-207"/>
</dbReference>
<dbReference type="PDB" id="7ZW0">
    <property type="method" value="EM"/>
    <property type="resolution" value="2.40 A"/>
    <property type="chains" value="sP=1-252"/>
</dbReference>
<dbReference type="PDB" id="8BN3">
    <property type="method" value="EM"/>
    <property type="resolution" value="2.40 A"/>
    <property type="chains" value="S0=2-252"/>
</dbReference>
<dbReference type="PDB" id="8BQD">
    <property type="method" value="EM"/>
    <property type="resolution" value="3.90 A"/>
    <property type="chains" value="P=2-207"/>
</dbReference>
<dbReference type="PDB" id="8BQX">
    <property type="method" value="EM"/>
    <property type="resolution" value="3.80 A"/>
    <property type="chains" value="P=2-207"/>
</dbReference>
<dbReference type="PDB" id="8C01">
    <property type="method" value="EM"/>
    <property type="resolution" value="2.70 A"/>
    <property type="chains" value="P=1-252"/>
</dbReference>
<dbReference type="PDB" id="8C83">
    <property type="method" value="EM"/>
    <property type="resolution" value="3.00 A"/>
    <property type="chains" value="P=1-252"/>
</dbReference>
<dbReference type="PDB" id="8CAH">
    <property type="method" value="EM"/>
    <property type="resolution" value="3.00 A"/>
    <property type="chains" value="P=1-252"/>
</dbReference>
<dbReference type="PDB" id="8CAS">
    <property type="method" value="EM"/>
    <property type="resolution" value="3.30 A"/>
    <property type="chains" value="P=1-252"/>
</dbReference>
<dbReference type="PDB" id="8CBJ">
    <property type="method" value="EM"/>
    <property type="resolution" value="3.80 A"/>
    <property type="chains" value="A=1-252"/>
</dbReference>
<dbReference type="PDB" id="8CCS">
    <property type="method" value="EM"/>
    <property type="resolution" value="1.97 A"/>
    <property type="chains" value="d=1-252"/>
</dbReference>
<dbReference type="PDB" id="8CDL">
    <property type="method" value="EM"/>
    <property type="resolution" value="2.72 A"/>
    <property type="chains" value="d=1-252"/>
</dbReference>
<dbReference type="PDB" id="8CDR">
    <property type="method" value="EM"/>
    <property type="resolution" value="2.04 A"/>
    <property type="chains" value="d=1-252"/>
</dbReference>
<dbReference type="PDB" id="8CEH">
    <property type="method" value="EM"/>
    <property type="resolution" value="2.05 A"/>
    <property type="chains" value="d=1-252"/>
</dbReference>
<dbReference type="PDB" id="8CF5">
    <property type="method" value="EM"/>
    <property type="resolution" value="2.71 A"/>
    <property type="chains" value="d=1-252"/>
</dbReference>
<dbReference type="PDB" id="8CG8">
    <property type="method" value="EM"/>
    <property type="resolution" value="2.57 A"/>
    <property type="chains" value="d=1-252"/>
</dbReference>
<dbReference type="PDB" id="8CGN">
    <property type="method" value="EM"/>
    <property type="resolution" value="2.28 A"/>
    <property type="chains" value="d=1-252"/>
</dbReference>
<dbReference type="PDB" id="8CIV">
    <property type="method" value="EM"/>
    <property type="resolution" value="2.47 A"/>
    <property type="chains" value="d=1-252"/>
</dbReference>
<dbReference type="PDB" id="8CKU">
    <property type="method" value="EM"/>
    <property type="resolution" value="3.11 A"/>
    <property type="chains" value="d=1-252"/>
</dbReference>
<dbReference type="PDB" id="8CMJ">
    <property type="method" value="EM"/>
    <property type="resolution" value="3.79 A"/>
    <property type="chains" value="d=1-252"/>
</dbReference>
<dbReference type="PDB" id="8EUB">
    <property type="method" value="EM"/>
    <property type="resolution" value="2.52 A"/>
    <property type="chains" value="BA=1-252"/>
</dbReference>
<dbReference type="PDB" id="8EVP">
    <property type="method" value="EM"/>
    <property type="resolution" value="2.38 A"/>
    <property type="chains" value="BA=1-252"/>
</dbReference>
<dbReference type="PDB" id="8EVQ">
    <property type="method" value="EM"/>
    <property type="resolution" value="2.72 A"/>
    <property type="chains" value="BA=1-252"/>
</dbReference>
<dbReference type="PDB" id="8EVR">
    <property type="method" value="EM"/>
    <property type="resolution" value="2.87 A"/>
    <property type="chains" value="BA=1-252"/>
</dbReference>
<dbReference type="PDB" id="8EVS">
    <property type="method" value="EM"/>
    <property type="resolution" value="2.62 A"/>
    <property type="chains" value="BA=1-252"/>
</dbReference>
<dbReference type="PDB" id="8EVT">
    <property type="method" value="EM"/>
    <property type="resolution" value="2.20 A"/>
    <property type="chains" value="BA=1-252"/>
</dbReference>
<dbReference type="PDB" id="8EWB">
    <property type="method" value="EM"/>
    <property type="resolution" value="2.87 A"/>
    <property type="chains" value="BA=1-252"/>
</dbReference>
<dbReference type="PDB" id="8EWC">
    <property type="method" value="EM"/>
    <property type="resolution" value="2.45 A"/>
    <property type="chains" value="BA=1-252"/>
</dbReference>
<dbReference type="PDB" id="8K2D">
    <property type="method" value="EM"/>
    <property type="resolution" value="3.20 A"/>
    <property type="chains" value="SA=1-252"/>
</dbReference>
<dbReference type="PDB" id="8K82">
    <property type="method" value="EM"/>
    <property type="resolution" value="3.00 A"/>
    <property type="chains" value="SA=1-252"/>
</dbReference>
<dbReference type="PDB" id="8P4V">
    <property type="method" value="X-ray"/>
    <property type="resolution" value="3.16 A"/>
    <property type="chains" value="B/s0=1-252"/>
</dbReference>
<dbReference type="PDB" id="8P9A">
    <property type="method" value="X-ray"/>
    <property type="resolution" value="2.90 A"/>
    <property type="chains" value="B/s0=1-252"/>
</dbReference>
<dbReference type="PDB" id="8T2X">
    <property type="method" value="EM"/>
    <property type="resolution" value="2.46 A"/>
    <property type="chains" value="BA=1-252"/>
</dbReference>
<dbReference type="PDB" id="8T2Y">
    <property type="method" value="EM"/>
    <property type="resolution" value="2.20 A"/>
    <property type="chains" value="BA=1-252"/>
</dbReference>
<dbReference type="PDB" id="8T2Z">
    <property type="method" value="EM"/>
    <property type="resolution" value="2.40 A"/>
    <property type="chains" value="BA=1-252"/>
</dbReference>
<dbReference type="PDB" id="8T30">
    <property type="method" value="EM"/>
    <property type="resolution" value="2.88 A"/>
    <property type="chains" value="BA=1-252"/>
</dbReference>
<dbReference type="PDB" id="8T3A">
    <property type="method" value="EM"/>
    <property type="resolution" value="2.86 A"/>
    <property type="chains" value="BA=1-252"/>
</dbReference>
<dbReference type="PDB" id="8T3B">
    <property type="method" value="EM"/>
    <property type="resolution" value="3.08 A"/>
    <property type="chains" value="BA=1-252"/>
</dbReference>
<dbReference type="PDB" id="8T3C">
    <property type="method" value="EM"/>
    <property type="resolution" value="3.86 A"/>
    <property type="chains" value="BA=1-252"/>
</dbReference>
<dbReference type="PDB" id="8T3D">
    <property type="method" value="EM"/>
    <property type="resolution" value="2.95 A"/>
    <property type="chains" value="BA=1-252"/>
</dbReference>
<dbReference type="PDB" id="8T3E">
    <property type="method" value="EM"/>
    <property type="resolution" value="3.04 A"/>
    <property type="chains" value="BA=1-252"/>
</dbReference>
<dbReference type="PDB" id="8T3F">
    <property type="method" value="EM"/>
    <property type="resolution" value="3.09 A"/>
    <property type="chains" value="BA=1-252"/>
</dbReference>
<dbReference type="PDB" id="8UT0">
    <property type="method" value="EM"/>
    <property type="resolution" value="3.22 A"/>
    <property type="chains" value="SP=2-207"/>
</dbReference>
<dbReference type="PDB" id="8UTI">
    <property type="method" value="EM"/>
    <property type="resolution" value="3.13 A"/>
    <property type="chains" value="SP=2-207"/>
</dbReference>
<dbReference type="PDB" id="8XU8">
    <property type="method" value="EM"/>
    <property type="resolution" value="3.40 A"/>
    <property type="chains" value="SP=2-207"/>
</dbReference>
<dbReference type="PDB" id="8Y0U">
    <property type="method" value="EM"/>
    <property type="resolution" value="3.59 A"/>
    <property type="chains" value="SA=1-252"/>
</dbReference>
<dbReference type="PDB" id="8YLD">
    <property type="method" value="EM"/>
    <property type="resolution" value="3.90 A"/>
    <property type="chains" value="SP=2-207"/>
</dbReference>
<dbReference type="PDB" id="8YLR">
    <property type="method" value="EM"/>
    <property type="resolution" value="3.90 A"/>
    <property type="chains" value="SP=2-207"/>
</dbReference>
<dbReference type="PDB" id="8Z70">
    <property type="method" value="EM"/>
    <property type="resolution" value="3.20 A"/>
    <property type="chains" value="SP=2-207"/>
</dbReference>
<dbReference type="PDB" id="8Z71">
    <property type="method" value="EM"/>
    <property type="resolution" value="3.60 A"/>
    <property type="chains" value="SP=2-207"/>
</dbReference>
<dbReference type="PDB" id="9F9S">
    <property type="method" value="EM"/>
    <property type="resolution" value="2.90 A"/>
    <property type="chains" value="Ra/Sa=1-252"/>
</dbReference>
<dbReference type="PDBsum" id="3J6X"/>
<dbReference type="PDBsum" id="3J6Y"/>
<dbReference type="PDBsum" id="3J77"/>
<dbReference type="PDBsum" id="3J78"/>
<dbReference type="PDBsum" id="4U3M"/>
<dbReference type="PDBsum" id="4U3N"/>
<dbReference type="PDBsum" id="4U3U"/>
<dbReference type="PDBsum" id="4U4N"/>
<dbReference type="PDBsum" id="4U4O"/>
<dbReference type="PDBsum" id="4U4Q"/>
<dbReference type="PDBsum" id="4U4R"/>
<dbReference type="PDBsum" id="4U4U"/>
<dbReference type="PDBsum" id="4U4Y"/>
<dbReference type="PDBsum" id="4U4Z"/>
<dbReference type="PDBsum" id="4U50"/>
<dbReference type="PDBsum" id="4U51"/>
<dbReference type="PDBsum" id="4U52"/>
<dbReference type="PDBsum" id="4U53"/>
<dbReference type="PDBsum" id="4U55"/>
<dbReference type="PDBsum" id="4U56"/>
<dbReference type="PDBsum" id="4U6F"/>
<dbReference type="PDBsum" id="4V4B"/>
<dbReference type="PDBsum" id="4V6I"/>
<dbReference type="PDBsum" id="4V7R"/>
<dbReference type="PDBsum" id="4V88"/>
<dbReference type="PDBsum" id="4V8Y"/>
<dbReference type="PDBsum" id="4V8Z"/>
<dbReference type="PDBsum" id="4V92"/>
<dbReference type="PDBsum" id="5DAT"/>
<dbReference type="PDBsum" id="5DC3"/>
<dbReference type="PDBsum" id="5DGE"/>
<dbReference type="PDBsum" id="5DGF"/>
<dbReference type="PDBsum" id="5DGV"/>
<dbReference type="PDBsum" id="5FCI"/>
<dbReference type="PDBsum" id="5FCJ"/>
<dbReference type="PDBsum" id="5I4L"/>
<dbReference type="PDBsum" id="5JUO"/>
<dbReference type="PDBsum" id="5JUP"/>
<dbReference type="PDBsum" id="5JUS"/>
<dbReference type="PDBsum" id="5JUT"/>
<dbReference type="PDBsum" id="5JUU"/>
<dbReference type="PDBsum" id="5LL6"/>
<dbReference type="PDBsum" id="5LYB"/>
<dbReference type="PDBsum" id="5M1J"/>
<dbReference type="PDBsum" id="5MC6"/>
<dbReference type="PDBsum" id="5MEI"/>
<dbReference type="PDBsum" id="5NDG"/>
<dbReference type="PDBsum" id="5NDV"/>
<dbReference type="PDBsum" id="5NDW"/>
<dbReference type="PDBsum" id="5OBM"/>
<dbReference type="PDBsum" id="5ON6"/>
<dbReference type="PDBsum" id="5TBW"/>
<dbReference type="PDBsum" id="5TGA"/>
<dbReference type="PDBsum" id="5TGM"/>
<dbReference type="PDBsum" id="6EML"/>
<dbReference type="PDBsum" id="6FAI"/>
<dbReference type="PDBsum" id="6GQ1"/>
<dbReference type="PDBsum" id="6GQB"/>
<dbReference type="PDBsum" id="6GQV"/>
<dbReference type="PDBsum" id="6HHQ"/>
<dbReference type="PDBsum" id="6I7O"/>
<dbReference type="PDBsum" id="6Q8Y"/>
<dbReference type="PDBsum" id="6RBD"/>
<dbReference type="PDBsum" id="6RBE"/>
<dbReference type="PDBsum" id="6S47"/>
<dbReference type="PDBsum" id="6SNT"/>
<dbReference type="PDBsum" id="6SV4"/>
<dbReference type="PDBsum" id="6T4Q"/>
<dbReference type="PDBsum" id="6T7I"/>
<dbReference type="PDBsum" id="6T7T"/>
<dbReference type="PDBsum" id="6T83"/>
<dbReference type="PDBsum" id="6TB3"/>
<dbReference type="PDBsum" id="6TNU"/>
<dbReference type="PDBsum" id="6WDR"/>
<dbReference type="PDBsum" id="6XIQ"/>
<dbReference type="PDBsum" id="6XIR"/>
<dbReference type="PDBsum" id="6Y7C"/>
<dbReference type="PDBsum" id="6Z6J"/>
<dbReference type="PDBsum" id="6Z6K"/>
<dbReference type="PDBsum" id="6ZCE"/>
<dbReference type="PDBsum" id="6ZU9"/>
<dbReference type="PDBsum" id="6ZVI"/>
<dbReference type="PDBsum" id="7A1G"/>
<dbReference type="PDBsum" id="7B7D"/>
<dbReference type="PDBsum" id="7MPI"/>
<dbReference type="PDBsum" id="7MPJ"/>
<dbReference type="PDBsum" id="7N8B"/>
<dbReference type="PDBsum" id="7NRC"/>
<dbReference type="PDBsum" id="7NRD"/>
<dbReference type="PDBsum" id="7ZPQ"/>
<dbReference type="PDBsum" id="7ZRS"/>
<dbReference type="PDBsum" id="7ZUW"/>
<dbReference type="PDBsum" id="7ZUX"/>
<dbReference type="PDBsum" id="7ZW0"/>
<dbReference type="PDBsum" id="8BN3"/>
<dbReference type="PDBsum" id="8BQD"/>
<dbReference type="PDBsum" id="8BQX"/>
<dbReference type="PDBsum" id="8C01"/>
<dbReference type="PDBsum" id="8C83"/>
<dbReference type="PDBsum" id="8CAH"/>
<dbReference type="PDBsum" id="8CAS"/>
<dbReference type="PDBsum" id="8CBJ"/>
<dbReference type="PDBsum" id="8CCS"/>
<dbReference type="PDBsum" id="8CDL"/>
<dbReference type="PDBsum" id="8CDR"/>
<dbReference type="PDBsum" id="8CEH"/>
<dbReference type="PDBsum" id="8CF5"/>
<dbReference type="PDBsum" id="8CG8"/>
<dbReference type="PDBsum" id="8CGN"/>
<dbReference type="PDBsum" id="8CIV"/>
<dbReference type="PDBsum" id="8CKU"/>
<dbReference type="PDBsum" id="8CMJ"/>
<dbReference type="PDBsum" id="8EUB"/>
<dbReference type="PDBsum" id="8EVP"/>
<dbReference type="PDBsum" id="8EVQ"/>
<dbReference type="PDBsum" id="8EVR"/>
<dbReference type="PDBsum" id="8EVS"/>
<dbReference type="PDBsum" id="8EVT"/>
<dbReference type="PDBsum" id="8EWB"/>
<dbReference type="PDBsum" id="8EWC"/>
<dbReference type="PDBsum" id="8K2D"/>
<dbReference type="PDBsum" id="8K82"/>
<dbReference type="PDBsum" id="8P4V"/>
<dbReference type="PDBsum" id="8P9A"/>
<dbReference type="PDBsum" id="8T2X"/>
<dbReference type="PDBsum" id="8T2Y"/>
<dbReference type="PDBsum" id="8T2Z"/>
<dbReference type="PDBsum" id="8T30"/>
<dbReference type="PDBsum" id="8T3A"/>
<dbReference type="PDBsum" id="8T3B"/>
<dbReference type="PDBsum" id="8T3C"/>
<dbReference type="PDBsum" id="8T3D"/>
<dbReference type="PDBsum" id="8T3E"/>
<dbReference type="PDBsum" id="8T3F"/>
<dbReference type="PDBsum" id="8UT0"/>
<dbReference type="PDBsum" id="8UTI"/>
<dbReference type="PDBsum" id="8XU8"/>
<dbReference type="PDBsum" id="8Y0U"/>
<dbReference type="PDBsum" id="8YLD"/>
<dbReference type="PDBsum" id="8YLR"/>
<dbReference type="PDBsum" id="8Z70"/>
<dbReference type="PDBsum" id="8Z71"/>
<dbReference type="PDBsum" id="9F9S"/>
<dbReference type="EMDB" id="EMD-0047"/>
<dbReference type="EMDB" id="EMD-0048"/>
<dbReference type="EMDB" id="EMD-0049"/>
<dbReference type="EMDB" id="EMD-10098"/>
<dbReference type="EMDB" id="EMD-10262"/>
<dbReference type="EMDB" id="EMD-10315"/>
<dbReference type="EMDB" id="EMD-10377"/>
<dbReference type="EMDB" id="EMD-10396"/>
<dbReference type="EMDB" id="EMD-10398"/>
<dbReference type="EMDB" id="EMD-10431"/>
<dbReference type="EMDB" id="EMD-10713"/>
<dbReference type="EMDB" id="EMD-11096"/>
<dbReference type="EMDB" id="EMD-11097"/>
<dbReference type="EMDB" id="EMD-11160"/>
<dbReference type="EMDB" id="EMD-11439"/>
<dbReference type="EMDB" id="EMD-11457"/>
<dbReference type="EMDB" id="EMD-11608"/>
<dbReference type="EMDB" id="EMD-12081"/>
<dbReference type="EMDB" id="EMD-12534"/>
<dbReference type="EMDB" id="EMD-12535"/>
<dbReference type="EMDB" id="EMD-14979"/>
<dbReference type="EMDB" id="EMD-14990"/>
<dbReference type="EMDB" id="EMD-16127"/>
<dbReference type="EMDB" id="EMD-16191"/>
<dbReference type="EMDB" id="EMD-16349"/>
<dbReference type="EMDB" id="EMD-16470"/>
<dbReference type="EMDB" id="EMD-16525"/>
<dbReference type="EMDB" id="EMD-16533"/>
<dbReference type="EMDB" id="EMD-16563"/>
<dbReference type="EMDB" id="EMD-16591"/>
<dbReference type="EMDB" id="EMD-16594"/>
<dbReference type="EMDB" id="EMD-16609"/>
<dbReference type="EMDB" id="EMD-16616"/>
<dbReference type="EMDB" id="EMD-16634"/>
<dbReference type="EMDB" id="EMD-16648"/>
<dbReference type="EMDB" id="EMD-16684"/>
<dbReference type="EMDB" id="EMD-16702"/>
<dbReference type="EMDB" id="EMD-16729"/>
<dbReference type="EMDB" id="EMD-21644"/>
<dbReference type="EMDB" id="EMD-22196"/>
<dbReference type="EMDB" id="EMD-22198"/>
<dbReference type="EMDB" id="EMD-23934"/>
<dbReference type="EMDB" id="EMD-23935"/>
<dbReference type="EMDB" id="EMD-24235"/>
<dbReference type="EMDB" id="EMD-28610"/>
<dbReference type="EMDB" id="EMD-28632"/>
<dbReference type="EMDB" id="EMD-28633"/>
<dbReference type="EMDB" id="EMD-28634"/>
<dbReference type="EMDB" id="EMD-28635"/>
<dbReference type="EMDB" id="EMD-28636"/>
<dbReference type="EMDB" id="EMD-28642"/>
<dbReference type="EMDB" id="EMD-28643"/>
<dbReference type="EMDB" id="EMD-3461"/>
<dbReference type="EMDB" id="EMD-36839"/>
<dbReference type="EMDB" id="EMD-36945"/>
<dbReference type="EMDB" id="EMD-38660"/>
<dbReference type="EMDB" id="EMD-40990"/>
<dbReference type="EMDB" id="EMD-40991"/>
<dbReference type="EMDB" id="EMD-40992"/>
<dbReference type="EMDB" id="EMD-40993"/>
<dbReference type="EMDB" id="EMD-40997"/>
<dbReference type="EMDB" id="EMD-40998"/>
<dbReference type="EMDB" id="EMD-40999"/>
<dbReference type="EMDB" id="EMD-41000"/>
<dbReference type="EMDB" id="EMD-41001"/>
<dbReference type="EMDB" id="EMD-41002"/>
<dbReference type="EMDB" id="EMD-4140"/>
<dbReference type="EMDB" id="EMD-4214"/>
<dbReference type="EMDB" id="EMD-42525"/>
<dbReference type="EMDB" id="EMD-42540"/>
<dbReference type="EMDB" id="EMD-4427"/>
<dbReference type="EMDB" id="EMD-4474"/>
<dbReference type="EMDB" id="EMD-4792"/>
<dbReference type="EMDB" id="EMD-4793"/>
<dbReference type="EMDB" id="EMD-50259"/>
<dbReference type="SMR" id="P32905"/>
<dbReference type="BioGRID" id="33467">
    <property type="interactions" value="787"/>
</dbReference>
<dbReference type="ComplexPortal" id="CPX-1599">
    <property type="entry name" value="40S cytosolic small ribosomal subunit"/>
</dbReference>
<dbReference type="DIP" id="DIP-5553N"/>
<dbReference type="FunCoup" id="P32905">
    <property type="interactions" value="1540"/>
</dbReference>
<dbReference type="IntAct" id="P32905">
    <property type="interactions" value="256"/>
</dbReference>
<dbReference type="MINT" id="P32905"/>
<dbReference type="STRING" id="4932.YGR214W"/>
<dbReference type="CarbonylDB" id="P32905"/>
<dbReference type="iPTMnet" id="P32905"/>
<dbReference type="PaxDb" id="4932-YGR214W"/>
<dbReference type="PeptideAtlas" id="P32905"/>
<dbReference type="TopDownProteomics" id="P32905"/>
<dbReference type="EnsemblFungi" id="YGR214W_mRNA">
    <property type="protein sequence ID" value="YGR214W"/>
    <property type="gene ID" value="YGR214W"/>
</dbReference>
<dbReference type="GeneID" id="853128"/>
<dbReference type="KEGG" id="sce:YGR214W"/>
<dbReference type="AGR" id="SGD:S000003446"/>
<dbReference type="SGD" id="S000003446">
    <property type="gene designation" value="RPS0A"/>
</dbReference>
<dbReference type="VEuPathDB" id="FungiDB:YGR214W"/>
<dbReference type="eggNOG" id="KOG0830">
    <property type="taxonomic scope" value="Eukaryota"/>
</dbReference>
<dbReference type="GeneTree" id="ENSGT00950000183099"/>
<dbReference type="HOGENOM" id="CLU_058171_2_0_1"/>
<dbReference type="InParanoid" id="P32905"/>
<dbReference type="OMA" id="VKNFFEP"/>
<dbReference type="OrthoDB" id="414863at2759"/>
<dbReference type="BioCyc" id="YEAST:G3O-30896-MONOMER"/>
<dbReference type="Reactome" id="R-SCE-156827">
    <property type="pathway name" value="L13a-mediated translational silencing of Ceruloplasmin expression"/>
</dbReference>
<dbReference type="Reactome" id="R-SCE-1799339">
    <property type="pathway name" value="SRP-dependent cotranslational protein targeting to membrane"/>
</dbReference>
<dbReference type="Reactome" id="R-SCE-72649">
    <property type="pathway name" value="Translation initiation complex formation"/>
</dbReference>
<dbReference type="Reactome" id="R-SCE-72689">
    <property type="pathway name" value="Formation of a pool of free 40S subunits"/>
</dbReference>
<dbReference type="Reactome" id="R-SCE-72695">
    <property type="pathway name" value="Formation of the ternary complex, and subsequently, the 43S complex"/>
</dbReference>
<dbReference type="Reactome" id="R-SCE-72702">
    <property type="pathway name" value="Ribosomal scanning and start codon recognition"/>
</dbReference>
<dbReference type="Reactome" id="R-SCE-72706">
    <property type="pathway name" value="GTP hydrolysis and joining of the 60S ribosomal subunit"/>
</dbReference>
<dbReference type="Reactome" id="R-SCE-975956">
    <property type="pathway name" value="Nonsense Mediated Decay (NMD) independent of the Exon Junction Complex (EJC)"/>
</dbReference>
<dbReference type="Reactome" id="R-SCE-975957">
    <property type="pathway name" value="Nonsense Mediated Decay (NMD) enhanced by the Exon Junction Complex (EJC)"/>
</dbReference>
<dbReference type="BioGRID-ORCS" id="853128">
    <property type="hits" value="4 hits in 10 CRISPR screens"/>
</dbReference>
<dbReference type="CD-CODE" id="E03F929F">
    <property type="entry name" value="Stress granule"/>
</dbReference>
<dbReference type="PRO" id="PR:P32905"/>
<dbReference type="Proteomes" id="UP000002311">
    <property type="component" value="Chromosome VII"/>
</dbReference>
<dbReference type="RNAct" id="P32905">
    <property type="molecule type" value="protein"/>
</dbReference>
<dbReference type="GO" id="GO:0030686">
    <property type="term" value="C:90S preribosome"/>
    <property type="evidence" value="ECO:0007005"/>
    <property type="project" value="SGD"/>
</dbReference>
<dbReference type="GO" id="GO:0010494">
    <property type="term" value="C:cytoplasmic stress granule"/>
    <property type="evidence" value="ECO:0007005"/>
    <property type="project" value="SGD"/>
</dbReference>
<dbReference type="GO" id="GO:0005829">
    <property type="term" value="C:cytosol"/>
    <property type="evidence" value="ECO:0000304"/>
    <property type="project" value="Reactome"/>
</dbReference>
<dbReference type="GO" id="GO:0022627">
    <property type="term" value="C:cytosolic small ribosomal subunit"/>
    <property type="evidence" value="ECO:0000314"/>
    <property type="project" value="SGD"/>
</dbReference>
<dbReference type="GO" id="GO:0003735">
    <property type="term" value="F:structural constituent of ribosome"/>
    <property type="evidence" value="ECO:0000314"/>
    <property type="project" value="SGD"/>
</dbReference>
<dbReference type="GO" id="GO:0002181">
    <property type="term" value="P:cytoplasmic translation"/>
    <property type="evidence" value="ECO:0000315"/>
    <property type="project" value="SGD"/>
</dbReference>
<dbReference type="GO" id="GO:0000447">
    <property type="term" value="P:endonucleolytic cleavage in ITS1 to separate SSU-rRNA from 5.8S rRNA and LSU-rRNA from tricistronic rRNA transcript (SSU-rRNA, 5.8S rRNA, LSU-rRNA)"/>
    <property type="evidence" value="ECO:0000315"/>
    <property type="project" value="SGD"/>
</dbReference>
<dbReference type="GO" id="GO:0000461">
    <property type="term" value="P:endonucleolytic cleavage to generate mature 3'-end of SSU-rRNA from (SSU-rRNA, 5.8S rRNA, LSU-rRNA)"/>
    <property type="evidence" value="ECO:0000315"/>
    <property type="project" value="SGD"/>
</dbReference>
<dbReference type="GO" id="GO:0000028">
    <property type="term" value="P:ribosomal small subunit assembly"/>
    <property type="evidence" value="ECO:0000315"/>
    <property type="project" value="SGD"/>
</dbReference>
<dbReference type="GO" id="GO:0000054">
    <property type="term" value="P:ribosomal subunit export from nucleus"/>
    <property type="evidence" value="ECO:0000316"/>
    <property type="project" value="SGD"/>
</dbReference>
<dbReference type="CDD" id="cd01425">
    <property type="entry name" value="RPS2"/>
    <property type="match status" value="1"/>
</dbReference>
<dbReference type="FunFam" id="3.40.50.10490:FF:000010">
    <property type="entry name" value="40S ribosomal protein S0"/>
    <property type="match status" value="1"/>
</dbReference>
<dbReference type="Gene3D" id="3.40.50.10490">
    <property type="entry name" value="Glucose-6-phosphate isomerase like protein, domain 1"/>
    <property type="match status" value="1"/>
</dbReference>
<dbReference type="HAMAP" id="MF_03015">
    <property type="entry name" value="Ribosomal_S2_euk"/>
    <property type="match status" value="1"/>
</dbReference>
<dbReference type="InterPro" id="IPR001865">
    <property type="entry name" value="Ribosomal_uS2"/>
</dbReference>
<dbReference type="InterPro" id="IPR018130">
    <property type="entry name" value="Ribosomal_uS2_CS"/>
</dbReference>
<dbReference type="InterPro" id="IPR027498">
    <property type="entry name" value="Ribosomal_uS2_euk"/>
</dbReference>
<dbReference type="InterPro" id="IPR005707">
    <property type="entry name" value="Ribosomal_uS2_euk/arc"/>
</dbReference>
<dbReference type="InterPro" id="IPR023591">
    <property type="entry name" value="Ribosomal_uS2_flav_dom_sf"/>
</dbReference>
<dbReference type="NCBIfam" id="TIGR01012">
    <property type="entry name" value="uS2_euk_arch"/>
    <property type="match status" value="1"/>
</dbReference>
<dbReference type="PANTHER" id="PTHR11489">
    <property type="entry name" value="40S RIBOSOMAL PROTEIN SA"/>
    <property type="match status" value="1"/>
</dbReference>
<dbReference type="Pfam" id="PF00318">
    <property type="entry name" value="Ribosomal_S2"/>
    <property type="match status" value="2"/>
</dbReference>
<dbReference type="PRINTS" id="PR00395">
    <property type="entry name" value="RIBOSOMALS2"/>
</dbReference>
<dbReference type="SUPFAM" id="SSF52313">
    <property type="entry name" value="Ribosomal protein S2"/>
    <property type="match status" value="1"/>
</dbReference>
<dbReference type="PROSITE" id="PS00962">
    <property type="entry name" value="RIBOSOMAL_S2_1"/>
    <property type="match status" value="1"/>
</dbReference>
<dbReference type="PROSITE" id="PS00963">
    <property type="entry name" value="RIBOSOMAL_S2_2"/>
    <property type="match status" value="1"/>
</dbReference>
<accession>P32905</accession>
<accession>D6VUZ7</accession>
<evidence type="ECO:0000255" key="1">
    <source>
        <dbReference type="HAMAP-Rule" id="MF_03015"/>
    </source>
</evidence>
<evidence type="ECO:0000256" key="2">
    <source>
        <dbReference type="SAM" id="MobiDB-lite"/>
    </source>
</evidence>
<evidence type="ECO:0000269" key="3">
    <source>
    </source>
</evidence>
<evidence type="ECO:0000269" key="4">
    <source>
    </source>
</evidence>
<evidence type="ECO:0000269" key="5">
    <source>
    </source>
</evidence>
<evidence type="ECO:0000269" key="6">
    <source>
    </source>
</evidence>
<evidence type="ECO:0000269" key="7">
    <source>
    </source>
</evidence>
<evidence type="ECO:0000269" key="8">
    <source>
    </source>
</evidence>
<evidence type="ECO:0000269" key="9">
    <source>
    </source>
</evidence>
<evidence type="ECO:0000303" key="10">
    <source>
    </source>
</evidence>
<evidence type="ECO:0000303" key="11">
    <source>
    </source>
</evidence>
<evidence type="ECO:0000305" key="12"/>
<evidence type="ECO:0000305" key="13">
    <source>
    </source>
</evidence>
<evidence type="ECO:0000305" key="14">
    <source>
    </source>
</evidence>
<evidence type="ECO:0000305" key="15">
    <source>
    </source>
</evidence>
<evidence type="ECO:0007829" key="16">
    <source>
        <dbReference type="PDB" id="6ZVI"/>
    </source>
</evidence>
<evidence type="ECO:0007829" key="17">
    <source>
        <dbReference type="PDB" id="7A1G"/>
    </source>
</evidence>
<evidence type="ECO:0007829" key="18">
    <source>
        <dbReference type="PDB" id="8C01"/>
    </source>
</evidence>
<evidence type="ECO:0007829" key="19">
    <source>
        <dbReference type="PDB" id="8C83"/>
    </source>
</evidence>
<gene>
    <name evidence="1 11" type="primary">RPS0A</name>
    <name type="synonym">NAB1</name>
    <name type="synonym">NAB1A</name>
    <name type="synonym">YST1</name>
    <name type="ordered locus">YGR214W</name>
</gene>
<reference key="1">
    <citation type="journal article" date="1996" name="J. Biol. Chem.">
        <title>Yeast proteins related to the p40/laminin receptor precursor are essential components of the 40 S ribosomal subunit.</title>
        <authorList>
            <person name="Demianova M.A."/>
            <person name="Formosa T.G."/>
            <person name="Ellis S.R."/>
        </authorList>
    </citation>
    <scope>NUCLEOTIDE SEQUENCE [GENOMIC DNA]</scope>
</reference>
<reference key="2">
    <citation type="journal article" date="1997" name="Yeast">
        <title>Sequence analysis of 203 kilobases from Saccharomyces cerevisiae chromosome VII.</title>
        <authorList>
            <person name="Rieger M."/>
            <person name="Brueckner M."/>
            <person name="Schaefer M."/>
            <person name="Mueller-Auer S."/>
        </authorList>
    </citation>
    <scope>NUCLEOTIDE SEQUENCE [GENOMIC DNA]</scope>
    <source>
        <strain>ATCC 204508 / S288c</strain>
    </source>
</reference>
<reference key="3">
    <citation type="journal article" date="1997" name="Nature">
        <title>The nucleotide sequence of Saccharomyces cerevisiae chromosome VII.</title>
        <authorList>
            <person name="Tettelin H."/>
            <person name="Agostoni-Carbone M.L."/>
            <person name="Albermann K."/>
            <person name="Albers M."/>
            <person name="Arroyo J."/>
            <person name="Backes U."/>
            <person name="Barreiros T."/>
            <person name="Bertani I."/>
            <person name="Bjourson A.J."/>
            <person name="Brueckner M."/>
            <person name="Bruschi C.V."/>
            <person name="Carignani G."/>
            <person name="Castagnoli L."/>
            <person name="Cerdan E."/>
            <person name="Clemente M.L."/>
            <person name="Coblenz A."/>
            <person name="Coglievina M."/>
            <person name="Coissac E."/>
            <person name="Defoor E."/>
            <person name="Del Bino S."/>
            <person name="Delius H."/>
            <person name="Delneri D."/>
            <person name="de Wergifosse P."/>
            <person name="Dujon B."/>
            <person name="Durand P."/>
            <person name="Entian K.-D."/>
            <person name="Eraso P."/>
            <person name="Escribano V."/>
            <person name="Fabiani L."/>
            <person name="Fartmann B."/>
            <person name="Feroli F."/>
            <person name="Feuermann M."/>
            <person name="Frontali L."/>
            <person name="Garcia-Gonzalez M."/>
            <person name="Garcia-Saez M.I."/>
            <person name="Goffeau A."/>
            <person name="Guerreiro P."/>
            <person name="Hani J."/>
            <person name="Hansen M."/>
            <person name="Hebling U."/>
            <person name="Hernandez K."/>
            <person name="Heumann K."/>
            <person name="Hilger F."/>
            <person name="Hofmann B."/>
            <person name="Indge K.J."/>
            <person name="James C.M."/>
            <person name="Klima R."/>
            <person name="Koetter P."/>
            <person name="Kramer B."/>
            <person name="Kramer W."/>
            <person name="Lauquin G."/>
            <person name="Leuther H."/>
            <person name="Louis E.J."/>
            <person name="Maillier E."/>
            <person name="Marconi A."/>
            <person name="Martegani E."/>
            <person name="Mazon M.J."/>
            <person name="Mazzoni C."/>
            <person name="McReynolds A.D.K."/>
            <person name="Melchioretto P."/>
            <person name="Mewes H.-W."/>
            <person name="Minenkova O."/>
            <person name="Mueller-Auer S."/>
            <person name="Nawrocki A."/>
            <person name="Netter P."/>
            <person name="Neu R."/>
            <person name="Nombela C."/>
            <person name="Oliver S.G."/>
            <person name="Panzeri L."/>
            <person name="Paoluzi S."/>
            <person name="Plevani P."/>
            <person name="Portetelle D."/>
            <person name="Portillo F."/>
            <person name="Potier S."/>
            <person name="Purnelle B."/>
            <person name="Rieger M."/>
            <person name="Riles L."/>
            <person name="Rinaldi T."/>
            <person name="Robben J."/>
            <person name="Rodrigues-Pousada C."/>
            <person name="Rodriguez-Belmonte E."/>
            <person name="Rodriguez-Torres A.M."/>
            <person name="Rose M."/>
            <person name="Ruzzi M."/>
            <person name="Saliola M."/>
            <person name="Sanchez-Perez M."/>
            <person name="Schaefer B."/>
            <person name="Schaefer M."/>
            <person name="Scharfe M."/>
            <person name="Schmidheini T."/>
            <person name="Schreer A."/>
            <person name="Skala J."/>
            <person name="Souciet J.-L."/>
            <person name="Steensma H.Y."/>
            <person name="Talla E."/>
            <person name="Thierry A."/>
            <person name="Vandenbol M."/>
            <person name="van der Aart Q.J.M."/>
            <person name="Van Dyck L."/>
            <person name="Vanoni M."/>
            <person name="Verhasselt P."/>
            <person name="Voet M."/>
            <person name="Volckaert G."/>
            <person name="Wambutt R."/>
            <person name="Watson M.D."/>
            <person name="Weber N."/>
            <person name="Wedler E."/>
            <person name="Wedler H."/>
            <person name="Wipfli P."/>
            <person name="Wolf K."/>
            <person name="Wright L.F."/>
            <person name="Zaccaria P."/>
            <person name="Zimmermann M."/>
            <person name="Zollner A."/>
            <person name="Kleine K."/>
        </authorList>
    </citation>
    <scope>NUCLEOTIDE SEQUENCE [LARGE SCALE GENOMIC DNA]</scope>
    <source>
        <strain>ATCC 204508 / S288c</strain>
    </source>
</reference>
<reference key="4">
    <citation type="journal article" date="2014" name="G3 (Bethesda)">
        <title>The reference genome sequence of Saccharomyces cerevisiae: Then and now.</title>
        <authorList>
            <person name="Engel S.R."/>
            <person name="Dietrich F.S."/>
            <person name="Fisk D.G."/>
            <person name="Binkley G."/>
            <person name="Balakrishnan R."/>
            <person name="Costanzo M.C."/>
            <person name="Dwight S.S."/>
            <person name="Hitz B.C."/>
            <person name="Karra K."/>
            <person name="Nash R.S."/>
            <person name="Weng S."/>
            <person name="Wong E.D."/>
            <person name="Lloyd P."/>
            <person name="Skrzypek M.S."/>
            <person name="Miyasato S.R."/>
            <person name="Simison M."/>
            <person name="Cherry J.M."/>
        </authorList>
    </citation>
    <scope>GENOME REANNOTATION</scope>
    <source>
        <strain>ATCC 204508 / S288c</strain>
    </source>
</reference>
<reference key="5">
    <citation type="journal article" date="1994" name="Electrophoresis">
        <title>Protein identifications for a Saccharomyces cerevisiae protein database.</title>
        <authorList>
            <person name="Garrels J.I."/>
            <person name="Futcher B."/>
            <person name="Kobayashi R."/>
            <person name="Latter G.I."/>
            <person name="Schwender B."/>
            <person name="Volpe T."/>
            <person name="Warner J.R."/>
            <person name="McLaughlin C.S."/>
        </authorList>
    </citation>
    <scope>PROTEIN SEQUENCE OF 118-133 AND 231-248</scope>
    <source>
        <strain>ATCC 204508 / S288c</strain>
    </source>
</reference>
<reference key="6">
    <citation type="journal article" date="1997" name="J. Biol. Chem.">
        <title>Metabolic and regulatory changes associated with growth of Saccharomyces cerevisiae in 1.4 M NaCl. Evidence for osmotic induction of glycerol dissimilation via the dihydroxyacetone pathway.</title>
        <authorList>
            <person name="Norbeck J."/>
            <person name="Blomberg A."/>
        </authorList>
    </citation>
    <scope>PROTEIN SEQUENCE OF 28-36 AND 135-146</scope>
    <source>
        <strain>ATCC 44827 / SKQ2N</strain>
    </source>
</reference>
<reference key="7">
    <citation type="journal article" date="1997" name="Electrophoresis">
        <title>Proteome studies of Saccharomyces cerevisiae: identification and characterization of abundant proteins.</title>
        <authorList>
            <person name="Garrels J.I."/>
            <person name="McLaughlin C.S."/>
            <person name="Warner J.R."/>
            <person name="Futcher B."/>
            <person name="Latter G.I."/>
            <person name="Kobayashi R."/>
            <person name="Schwender B."/>
            <person name="Volpe T."/>
            <person name="Anderson D.S."/>
            <person name="Mesquita-Fuentes R."/>
            <person name="Payne W.E."/>
        </authorList>
    </citation>
    <scope>ACETYLATION AT SER-2</scope>
</reference>
<reference key="8">
    <citation type="journal article" date="1998" name="Mol. Biol. Evol.">
        <title>The 67-kDa laminin receptor originated from a ribosomal protein that acquired a dual function during evolution.</title>
        <authorList>
            <person name="Ardini E."/>
            <person name="Pesole G."/>
            <person name="Tagliabue E."/>
            <person name="Magnifico A."/>
            <person name="Castronovo V."/>
            <person name="Sobel M.E."/>
            <person name="Colnaghi M.I."/>
            <person name="Menard S."/>
        </authorList>
    </citation>
    <scope>GENE EVOLUTION</scope>
</reference>
<reference key="9">
    <citation type="journal article" date="1998" name="Yeast">
        <title>The list of cytoplasmic ribosomal proteins of Saccharomyces cerevisiae.</title>
        <authorList>
            <person name="Planta R.J."/>
            <person name="Mager W.H."/>
        </authorList>
    </citation>
    <scope>NOMENCLATURE</scope>
    <scope>SUBUNIT</scope>
</reference>
<reference key="10">
    <citation type="journal article" date="1999" name="Cancer Res.">
        <title>Yeast proteins related to the p40/laminin receptor precursor are required for 20S ribosomal RNA processing and the maturation of 40S ribosomal subunits.</title>
        <authorList>
            <person name="Ford C.L."/>
            <person name="Randal-Whitis L."/>
            <person name="Ellis S.R."/>
        </authorList>
    </citation>
    <scope>FUNCTION</scope>
    <scope>SUBUNIT</scope>
</reference>
<reference key="11">
    <citation type="journal article" date="1999" name="J. Biol. Chem.">
        <title>The action of N-terminal acetyltransferases on yeast ribosomal proteins.</title>
        <authorList>
            <person name="Arnold R.J."/>
            <person name="Polevoda B."/>
            <person name="Reilly J.P."/>
            <person name="Sherman F."/>
        </authorList>
    </citation>
    <scope>CLEAVAGE OF INITIATOR METHIONINE</scope>
    <scope>ACETYLATION AT SER-2 BY NATA</scope>
</reference>
<reference key="12">
    <citation type="journal article" date="2003" name="Nature">
        <title>Global analysis of protein localization in budding yeast.</title>
        <authorList>
            <person name="Huh W.-K."/>
            <person name="Falvo J.V."/>
            <person name="Gerke L.C."/>
            <person name="Carroll A.S."/>
            <person name="Howson R.W."/>
            <person name="Weissman J.S."/>
            <person name="O'Shea E.K."/>
        </authorList>
    </citation>
    <scope>SUBCELLULAR LOCATION [LARGE SCALE ANALYSIS]</scope>
</reference>
<reference key="13">
    <citation type="journal article" date="2003" name="Nature">
        <title>Global analysis of protein expression in yeast.</title>
        <authorList>
            <person name="Ghaemmaghami S."/>
            <person name="Huh W.-K."/>
            <person name="Bower K."/>
            <person name="Howson R.W."/>
            <person name="Belle A."/>
            <person name="Dephoure N."/>
            <person name="O'Shea E.K."/>
            <person name="Weissman J.S."/>
        </authorList>
    </citation>
    <scope>LEVEL OF PROTEIN EXPRESSION [LARGE SCALE ANALYSIS]</scope>
</reference>
<reference key="14">
    <citation type="journal article" date="2003" name="Nucleic Acids Res.">
        <title>Ribosomal proteins Rps0 and Rps21 of Saccharomyces cerevisiae have overlapping functions in the maturation of the 3' end of 18S rRNA.</title>
        <authorList>
            <person name="Tabb-Massey A."/>
            <person name="Caffrey J.M."/>
            <person name="Logsden P."/>
            <person name="Taylor S."/>
            <person name="Trent J.O."/>
            <person name="Ellis S.R."/>
        </authorList>
    </citation>
    <scope>FUNCTION</scope>
    <scope>SUBCELLULAR LOCATION</scope>
    <scope>DISRUPTION PHENOTYPE</scope>
</reference>
<reference key="15">
    <citation type="journal article" date="2014" name="Curr. Opin. Struct. Biol.">
        <title>A new system for naming ribosomal proteins.</title>
        <authorList>
            <person name="Ban N."/>
            <person name="Beckmann R."/>
            <person name="Cate J.H.D."/>
            <person name="Dinman J.D."/>
            <person name="Dragon F."/>
            <person name="Ellis S.R."/>
            <person name="Lafontaine D.L.J."/>
            <person name="Lindahl L."/>
            <person name="Liljas A."/>
            <person name="Lipton J.M."/>
            <person name="McAlear M.A."/>
            <person name="Moore P.B."/>
            <person name="Noller H.F."/>
            <person name="Ortega J."/>
            <person name="Panse V.G."/>
            <person name="Ramakrishnan V."/>
            <person name="Spahn C.M.T."/>
            <person name="Steitz T.A."/>
            <person name="Tchorzewski M."/>
            <person name="Tollervey D."/>
            <person name="Warren A.J."/>
            <person name="Williamson J.R."/>
            <person name="Wilson D."/>
            <person name="Yonath A."/>
            <person name="Yusupov M."/>
        </authorList>
    </citation>
    <scope>NOMENCLATURE</scope>
</reference>
<reference key="16">
    <citation type="journal article" date="2001" name="Cell">
        <title>Structure of the 80S ribosome from Saccharomyces cerevisiae -- tRNA-ribosome and subunit-subunit interactions.</title>
        <authorList>
            <person name="Spahn C.M.T."/>
            <person name="Beckmann R."/>
            <person name="Eswar N."/>
            <person name="Penczek P.A."/>
            <person name="Sali A."/>
            <person name="Blobel G."/>
            <person name="Frank J."/>
        </authorList>
    </citation>
    <scope>3D-STRUCTURE MODELING OF 14-198</scope>
    <scope>ELECTRON MICROSCOPY</scope>
</reference>
<reference key="17">
    <citation type="journal article" date="2004" name="EMBO J.">
        <title>Domain movements of elongation factor eEF2 and the eukaryotic 80S ribosome facilitate tRNA translocation.</title>
        <authorList>
            <person name="Spahn C.M.T."/>
            <person name="Gomez-Lorenzo M.G."/>
            <person name="Grassucci R.A."/>
            <person name="Joergensen R."/>
            <person name="Andersen G.R."/>
            <person name="Beckmann R."/>
            <person name="Penczek P.A."/>
            <person name="Ballesta J.P.G."/>
            <person name="Frank J."/>
        </authorList>
    </citation>
    <scope>3D-STRUCTURE MODELING OF 14-198</scope>
    <scope>ELECTRON MICROSCOPY</scope>
</reference>
<reference key="18">
    <citation type="journal article" date="2010" name="Science">
        <title>Crystal structure of the eukaryotic ribosome.</title>
        <authorList>
            <person name="Ben-Shem A."/>
            <person name="Jenner L."/>
            <person name="Yusupova G."/>
            <person name="Yusupov M."/>
        </authorList>
    </citation>
    <scope>X-RAY CRYSTALLOGRAPHY (4.00 ANGSTROMS) OF 80S RIBOSOME</scope>
</reference>
<reference key="19">
    <citation type="journal article" date="2011" name="Science">
        <title>The structure of the eukaryotic ribosome at 3.0 A resolution.</title>
        <authorList>
            <person name="Ben-Shem A."/>
            <person name="Garreau de Loubresse N."/>
            <person name="Melnikov S."/>
            <person name="Jenner L."/>
            <person name="Yusupova G."/>
            <person name="Yusupov M."/>
        </authorList>
    </citation>
    <scope>X-RAY CRYSTALLOGRAPHY (3.00 ANGSTROMS) OF 80S RIBOSOME</scope>
    <scope>SUBUNIT</scope>
    <scope>SUBCELLULAR LOCATION</scope>
</reference>
<proteinExistence type="evidence at protein level"/>
<organism>
    <name type="scientific">Saccharomyces cerevisiae (strain ATCC 204508 / S288c)</name>
    <name type="common">Baker's yeast</name>
    <dbReference type="NCBI Taxonomy" id="559292"/>
    <lineage>
        <taxon>Eukaryota</taxon>
        <taxon>Fungi</taxon>
        <taxon>Dikarya</taxon>
        <taxon>Ascomycota</taxon>
        <taxon>Saccharomycotina</taxon>
        <taxon>Saccharomycetes</taxon>
        <taxon>Saccharomycetales</taxon>
        <taxon>Saccharomycetaceae</taxon>
        <taxon>Saccharomyces</taxon>
    </lineage>
</organism>
<comment type="function">
    <text evidence="6 9 13">Component of the ribosome, a large ribonucleoprotein complex responsible for the synthesis of proteins in the cell. The small ribosomal subunit (SSU) binds messenger RNAs (mRNAs) and translates the encoded message by selecting cognate aminoacyl-transfer RNA (tRNA) molecules. The large subunit (LSU) contains the ribosomal catalytic site termed the peptidyl transferase center (PTC), which catalyzes the formation of peptide bonds, thereby polymerizing the amino acids delivered by tRNAs into a polypeptide chain. The nascent polypeptides leave the ribosome through a tunnel in the LSU and interact with protein factors that function in enzymatic processing, targeting, and the membrane insertion of nascent chains at the exit of the ribosomal tunnel (PubMed:22096102). uS2 is required for the assembly and/or stability of the 40S ribosomal subunit. Required for the processing of the 20S rRNA-precursor to mature 18S rRNA in a late step of the maturation of 40S ribosomal subunits (PubMed:14627813, PubMed:9973221).</text>
</comment>
<comment type="subunit">
    <text evidence="7 14">Component of the small ribosomal subunit (SSU). Mature yeast ribosomes consist of a small (40S) and a large (60S) subunit. The 40S small subunit contains 1 molecule of ribosomal RNA (18S rRNA) and 33 different proteins (encoded by 57 genes). The large 60S subunit contains 3 rRNA molecules (25S, 5.8S and 5S rRNA) and 46 different proteins (encoded by 81 genes) (PubMed:22096102, PubMed:9559554).</text>
</comment>
<comment type="subcellular location">
    <subcellularLocation>
        <location evidence="1 4 6 7">Cytoplasm</location>
    </subcellularLocation>
</comment>
<comment type="PTM">
    <text evidence="3 8">N-terminally acetylated by acetyltransferase NatA.</text>
</comment>
<comment type="disruption phenotype">
    <text evidence="6">Reduction in growth rate, a decrease in free 40S subunits, an increase in the amount of free 60S subunits and a decrease in polysome size.</text>
</comment>
<comment type="miscellaneous">
    <text evidence="5">Present with 93700 molecules/cell in log phase SD medium.</text>
</comment>
<comment type="miscellaneous">
    <text evidence="12">There are 2 genes for uS2 in yeast.</text>
</comment>
<comment type="miscellaneous">
    <text evidence="15">This protein appears to have acquired a second function as a laminin receptor specifically in the vertebrate lineage. This protein does not bind laminin.</text>
</comment>
<comment type="similarity">
    <text evidence="1">Belongs to the universal ribosomal protein uS2 family.</text>
</comment>